<dbReference type="EC" id="1.17.99.9" evidence="1"/>
<dbReference type="EMBL" id="CP000394">
    <property type="protein sequence ID" value="ABI63082.1"/>
    <property type="molecule type" value="Genomic_DNA"/>
</dbReference>
<dbReference type="RefSeq" id="WP_011632884.1">
    <property type="nucleotide sequence ID" value="NC_008343.2"/>
</dbReference>
<dbReference type="SMR" id="Q0BQ20"/>
<dbReference type="STRING" id="391165.GbCGDNIH1_2184"/>
<dbReference type="KEGG" id="gbe:GbCGDNIH1_2184"/>
<dbReference type="eggNOG" id="COG1612">
    <property type="taxonomic scope" value="Bacteria"/>
</dbReference>
<dbReference type="HOGENOM" id="CLU_017627_0_0_5"/>
<dbReference type="OrthoDB" id="9793156at2"/>
<dbReference type="UniPathway" id="UPA00269">
    <property type="reaction ID" value="UER00713"/>
</dbReference>
<dbReference type="Proteomes" id="UP000001963">
    <property type="component" value="Chromosome"/>
</dbReference>
<dbReference type="GO" id="GO:0005886">
    <property type="term" value="C:plasma membrane"/>
    <property type="evidence" value="ECO:0007669"/>
    <property type="project" value="UniProtKB-SubCell"/>
</dbReference>
<dbReference type="GO" id="GO:0046872">
    <property type="term" value="F:metal ion binding"/>
    <property type="evidence" value="ECO:0007669"/>
    <property type="project" value="UniProtKB-KW"/>
</dbReference>
<dbReference type="GO" id="GO:0016653">
    <property type="term" value="F:oxidoreductase activity, acting on NAD(P)H, heme protein as acceptor"/>
    <property type="evidence" value="ECO:0007669"/>
    <property type="project" value="InterPro"/>
</dbReference>
<dbReference type="GO" id="GO:0006784">
    <property type="term" value="P:heme A biosynthetic process"/>
    <property type="evidence" value="ECO:0007669"/>
    <property type="project" value="UniProtKB-UniRule"/>
</dbReference>
<dbReference type="HAMAP" id="MF_01665">
    <property type="entry name" value="HemeA_synth_type2"/>
    <property type="match status" value="1"/>
</dbReference>
<dbReference type="InterPro" id="IPR003780">
    <property type="entry name" value="COX15/CtaA_fam"/>
</dbReference>
<dbReference type="InterPro" id="IPR023754">
    <property type="entry name" value="HemeA_Synthase_type2"/>
</dbReference>
<dbReference type="PANTHER" id="PTHR23289">
    <property type="entry name" value="CYTOCHROME C OXIDASE ASSEMBLY PROTEIN COX15"/>
    <property type="match status" value="1"/>
</dbReference>
<dbReference type="PANTHER" id="PTHR23289:SF2">
    <property type="entry name" value="CYTOCHROME C OXIDASE ASSEMBLY PROTEIN COX15 HOMOLOG"/>
    <property type="match status" value="1"/>
</dbReference>
<dbReference type="Pfam" id="PF02628">
    <property type="entry name" value="COX15-CtaA"/>
    <property type="match status" value="1"/>
</dbReference>
<organism>
    <name type="scientific">Granulibacter bethesdensis (strain ATCC BAA-1260 / CGDNIH1)</name>
    <dbReference type="NCBI Taxonomy" id="391165"/>
    <lineage>
        <taxon>Bacteria</taxon>
        <taxon>Pseudomonadati</taxon>
        <taxon>Pseudomonadota</taxon>
        <taxon>Alphaproteobacteria</taxon>
        <taxon>Acetobacterales</taxon>
        <taxon>Acetobacteraceae</taxon>
        <taxon>Granulibacter</taxon>
    </lineage>
</organism>
<name>CTAA_GRABC</name>
<reference key="1">
    <citation type="journal article" date="2007" name="J. Bacteriol.">
        <title>Genome sequence analysis of the emerging human pathogenic acetic acid bacterium Granulibacter bethesdensis.</title>
        <authorList>
            <person name="Greenberg D.E."/>
            <person name="Porcella S.F."/>
            <person name="Zelazny A.M."/>
            <person name="Virtaneva K."/>
            <person name="Sturdevant D.E."/>
            <person name="Kupko J.J. III"/>
            <person name="Barbian K.D."/>
            <person name="Babar A."/>
            <person name="Dorward D.W."/>
            <person name="Holland S.M."/>
        </authorList>
    </citation>
    <scope>NUCLEOTIDE SEQUENCE [LARGE SCALE GENOMIC DNA]</scope>
    <source>
        <strain>ATCC BAA-1260 / CGDNIH1</strain>
    </source>
</reference>
<sequence>MSDHIRAASSPSRHGSEHGWQHAVTPQQRNRILVATWMFTLCFMILVMVMLGGATRLTGSGLSIMEWAPLMGTLPPTSQTEWERLYALYQKIPQYALVNHGFGLDGFKHIFWLEWTHRLWGRLIGLVLLLPLIFLAVTRRIERSLIPRLILIFVLGGLQGAVGWFMVASGFFPDSTAVSPYRLVVHLSFALLLYSALLWTALSVLNPEPRPLPGTVGLRRMSAVTLGLVCITIIAGGFVAGIHAGLDYNTFPLMDGRLVPEGYGEGHRAMFENIPTVQFDHRLLATLTALTALLTGLIGFRRGGNARRAVLPLMVAVILQYALGIATLLSVVAVPVAVVHQGMAVLLLTAAIVTLHSLRGAGRTASINAPASSH</sequence>
<accession>Q0BQ20</accession>
<proteinExistence type="inferred from homology"/>
<gene>
    <name evidence="1" type="primary">ctaA</name>
    <name type="ordered locus">GbCGDNIH1_2184</name>
</gene>
<keyword id="KW-1003">Cell membrane</keyword>
<keyword id="KW-0350">Heme biosynthesis</keyword>
<keyword id="KW-0408">Iron</keyword>
<keyword id="KW-0472">Membrane</keyword>
<keyword id="KW-0479">Metal-binding</keyword>
<keyword id="KW-0560">Oxidoreductase</keyword>
<keyword id="KW-1185">Reference proteome</keyword>
<keyword id="KW-0812">Transmembrane</keyword>
<keyword id="KW-1133">Transmembrane helix</keyword>
<comment type="function">
    <text evidence="1">Catalyzes the conversion of heme O to heme A by two successive hydroxylations of the methyl group at C8. The first hydroxylation forms heme I, the second hydroxylation results in an unstable dihydroxymethyl group, which spontaneously dehydrates, resulting in the formyl group of heme A.</text>
</comment>
<comment type="catalytic activity">
    <reaction evidence="1">
        <text>Fe(II)-heme o + 2 A + H2O = Fe(II)-heme a + 2 AH2</text>
        <dbReference type="Rhea" id="RHEA:63388"/>
        <dbReference type="ChEBI" id="CHEBI:13193"/>
        <dbReference type="ChEBI" id="CHEBI:15377"/>
        <dbReference type="ChEBI" id="CHEBI:17499"/>
        <dbReference type="ChEBI" id="CHEBI:60530"/>
        <dbReference type="ChEBI" id="CHEBI:61715"/>
        <dbReference type="EC" id="1.17.99.9"/>
    </reaction>
    <physiologicalReaction direction="left-to-right" evidence="1">
        <dbReference type="Rhea" id="RHEA:63389"/>
    </physiologicalReaction>
</comment>
<comment type="cofactor">
    <cofactor evidence="1">
        <name>heme b</name>
        <dbReference type="ChEBI" id="CHEBI:60344"/>
    </cofactor>
</comment>
<comment type="pathway">
    <text evidence="1">Porphyrin-containing compound metabolism; heme A biosynthesis; heme A from heme O: step 1/1.</text>
</comment>
<comment type="subunit">
    <text evidence="1">Interacts with CtaB.</text>
</comment>
<comment type="subcellular location">
    <subcellularLocation>
        <location evidence="1">Cell membrane</location>
        <topology evidence="1">Multi-pass membrane protein</topology>
    </subcellularLocation>
</comment>
<comment type="similarity">
    <text evidence="1">Belongs to the COX15/CtaA family. Type 2 subfamily.</text>
</comment>
<evidence type="ECO:0000255" key="1">
    <source>
        <dbReference type="HAMAP-Rule" id="MF_01665"/>
    </source>
</evidence>
<evidence type="ECO:0000256" key="2">
    <source>
        <dbReference type="SAM" id="MobiDB-lite"/>
    </source>
</evidence>
<feature type="chain" id="PRO_0000349038" description="Heme A synthase">
    <location>
        <begin position="1"/>
        <end position="374"/>
    </location>
</feature>
<feature type="transmembrane region" description="Helical" evidence="1">
    <location>
        <begin position="32"/>
        <end position="52"/>
    </location>
</feature>
<feature type="transmembrane region" description="Helical" evidence="1">
    <location>
        <begin position="118"/>
        <end position="138"/>
    </location>
</feature>
<feature type="transmembrane region" description="Helical" evidence="1">
    <location>
        <begin position="149"/>
        <end position="169"/>
    </location>
</feature>
<feature type="transmembrane region" description="Helical" evidence="1">
    <location>
        <begin position="184"/>
        <end position="204"/>
    </location>
</feature>
<feature type="transmembrane region" description="Helical" evidence="1">
    <location>
        <begin position="226"/>
        <end position="246"/>
    </location>
</feature>
<feature type="transmembrane region" description="Helical" evidence="1">
    <location>
        <begin position="283"/>
        <end position="300"/>
    </location>
</feature>
<feature type="transmembrane region" description="Helical" evidence="1">
    <location>
        <begin position="309"/>
        <end position="329"/>
    </location>
</feature>
<feature type="transmembrane region" description="Helical" evidence="1">
    <location>
        <begin position="332"/>
        <end position="352"/>
    </location>
</feature>
<feature type="region of interest" description="Disordered" evidence="2">
    <location>
        <begin position="1"/>
        <end position="22"/>
    </location>
</feature>
<feature type="binding site" description="axial binding residue" evidence="1">
    <location>
        <position position="281"/>
    </location>
    <ligand>
        <name>heme</name>
        <dbReference type="ChEBI" id="CHEBI:30413"/>
    </ligand>
    <ligandPart>
        <name>Fe</name>
        <dbReference type="ChEBI" id="CHEBI:18248"/>
    </ligandPart>
</feature>
<feature type="binding site" description="axial binding residue" evidence="1">
    <location>
        <position position="340"/>
    </location>
    <ligand>
        <name>heme</name>
        <dbReference type="ChEBI" id="CHEBI:30413"/>
    </ligand>
    <ligandPart>
        <name>Fe</name>
        <dbReference type="ChEBI" id="CHEBI:18248"/>
    </ligandPart>
</feature>
<protein>
    <recommendedName>
        <fullName evidence="1">Heme A synthase</fullName>
        <shortName evidence="1">HAS</shortName>
        <ecNumber evidence="1">1.17.99.9</ecNumber>
    </recommendedName>
    <alternativeName>
        <fullName evidence="1">Cytochrome aa3-controlling protein</fullName>
    </alternativeName>
</protein>